<reference key="1">
    <citation type="journal article" date="2011" name="Stand. Genomic Sci.">
        <title>Complete genome sequence of the halophilic and highly halotolerant Chromohalobacter salexigens type strain (1H11(T)).</title>
        <authorList>
            <person name="Copeland A."/>
            <person name="O'Connor K."/>
            <person name="Lucas S."/>
            <person name="Lapidus A."/>
            <person name="Berry K.W."/>
            <person name="Detter J.C."/>
            <person name="Del Rio T.G."/>
            <person name="Hammon N."/>
            <person name="Dalin E."/>
            <person name="Tice H."/>
            <person name="Pitluck S."/>
            <person name="Bruce D."/>
            <person name="Goodwin L."/>
            <person name="Han C."/>
            <person name="Tapia R."/>
            <person name="Saunders E."/>
            <person name="Schmutz J."/>
            <person name="Brettin T."/>
            <person name="Larimer F."/>
            <person name="Land M."/>
            <person name="Hauser L."/>
            <person name="Vargas C."/>
            <person name="Nieto J.J."/>
            <person name="Kyrpides N.C."/>
            <person name="Ivanova N."/>
            <person name="Goker M."/>
            <person name="Klenk H.P."/>
            <person name="Csonka L.N."/>
            <person name="Woyke T."/>
        </authorList>
    </citation>
    <scope>NUCLEOTIDE SEQUENCE [LARGE SCALE GENOMIC DNA]</scope>
    <source>
        <strain>ATCC BAA-138 / DSM 3043 / CIP 106854 / NCIMB 13768 / 1H11</strain>
    </source>
</reference>
<comment type="function">
    <text evidence="1">This protein is involved in the repair of mismatches in DNA. It is possible that it carries out the mismatch recognition step. This protein has a weak ATPase activity.</text>
</comment>
<comment type="similarity">
    <text evidence="1">Belongs to the DNA mismatch repair MutS family.</text>
</comment>
<accession>Q1QZX5</accession>
<gene>
    <name evidence="1" type="primary">mutS</name>
    <name type="ordered locus">Csal_0621</name>
</gene>
<name>MUTS_CHRSD</name>
<keyword id="KW-0067">ATP-binding</keyword>
<keyword id="KW-0227">DNA damage</keyword>
<keyword id="KW-0234">DNA repair</keyword>
<keyword id="KW-0238">DNA-binding</keyword>
<keyword id="KW-0547">Nucleotide-binding</keyword>
<keyword id="KW-1185">Reference proteome</keyword>
<feature type="chain" id="PRO_0000335136" description="DNA mismatch repair protein MutS">
    <location>
        <begin position="1"/>
        <end position="859"/>
    </location>
</feature>
<feature type="binding site" evidence="1">
    <location>
        <begin position="615"/>
        <end position="622"/>
    </location>
    <ligand>
        <name>ATP</name>
        <dbReference type="ChEBI" id="CHEBI:30616"/>
    </ligand>
</feature>
<organism>
    <name type="scientific">Chromohalobacter salexigens (strain ATCC BAA-138 / DSM 3043 / CIP 106854 / NCIMB 13768 / 1H11)</name>
    <dbReference type="NCBI Taxonomy" id="290398"/>
    <lineage>
        <taxon>Bacteria</taxon>
        <taxon>Pseudomonadati</taxon>
        <taxon>Pseudomonadota</taxon>
        <taxon>Gammaproteobacteria</taxon>
        <taxon>Oceanospirillales</taxon>
        <taxon>Halomonadaceae</taxon>
        <taxon>Chromohalobacter</taxon>
    </lineage>
</organism>
<protein>
    <recommendedName>
        <fullName evidence="1">DNA mismatch repair protein MutS</fullName>
    </recommendedName>
</protein>
<evidence type="ECO:0000255" key="1">
    <source>
        <dbReference type="HAMAP-Rule" id="MF_00096"/>
    </source>
</evidence>
<dbReference type="EMBL" id="CP000285">
    <property type="protein sequence ID" value="ABE57983.1"/>
    <property type="molecule type" value="Genomic_DNA"/>
</dbReference>
<dbReference type="RefSeq" id="WP_011505929.1">
    <property type="nucleotide sequence ID" value="NC_007963.1"/>
</dbReference>
<dbReference type="SMR" id="Q1QZX5"/>
<dbReference type="STRING" id="290398.Csal_0621"/>
<dbReference type="GeneID" id="95333376"/>
<dbReference type="KEGG" id="csa:Csal_0621"/>
<dbReference type="eggNOG" id="COG0249">
    <property type="taxonomic scope" value="Bacteria"/>
</dbReference>
<dbReference type="HOGENOM" id="CLU_002472_4_0_6"/>
<dbReference type="OrthoDB" id="9802448at2"/>
<dbReference type="Proteomes" id="UP000000239">
    <property type="component" value="Chromosome"/>
</dbReference>
<dbReference type="GO" id="GO:0005829">
    <property type="term" value="C:cytosol"/>
    <property type="evidence" value="ECO:0007669"/>
    <property type="project" value="TreeGrafter"/>
</dbReference>
<dbReference type="GO" id="GO:0005524">
    <property type="term" value="F:ATP binding"/>
    <property type="evidence" value="ECO:0007669"/>
    <property type="project" value="UniProtKB-UniRule"/>
</dbReference>
<dbReference type="GO" id="GO:0140664">
    <property type="term" value="F:ATP-dependent DNA damage sensor activity"/>
    <property type="evidence" value="ECO:0007669"/>
    <property type="project" value="InterPro"/>
</dbReference>
<dbReference type="GO" id="GO:0003684">
    <property type="term" value="F:damaged DNA binding"/>
    <property type="evidence" value="ECO:0007669"/>
    <property type="project" value="UniProtKB-UniRule"/>
</dbReference>
<dbReference type="GO" id="GO:0030983">
    <property type="term" value="F:mismatched DNA binding"/>
    <property type="evidence" value="ECO:0007669"/>
    <property type="project" value="InterPro"/>
</dbReference>
<dbReference type="GO" id="GO:0006298">
    <property type="term" value="P:mismatch repair"/>
    <property type="evidence" value="ECO:0007669"/>
    <property type="project" value="UniProtKB-UniRule"/>
</dbReference>
<dbReference type="CDD" id="cd03284">
    <property type="entry name" value="ABC_MutS1"/>
    <property type="match status" value="1"/>
</dbReference>
<dbReference type="FunFam" id="1.10.1420.10:FF:000002">
    <property type="entry name" value="DNA mismatch repair protein MutS"/>
    <property type="match status" value="1"/>
</dbReference>
<dbReference type="FunFam" id="3.40.1170.10:FF:000001">
    <property type="entry name" value="DNA mismatch repair protein MutS"/>
    <property type="match status" value="1"/>
</dbReference>
<dbReference type="FunFam" id="3.40.50.300:FF:000283">
    <property type="entry name" value="DNA mismatch repair protein MutS"/>
    <property type="match status" value="1"/>
</dbReference>
<dbReference type="Gene3D" id="1.10.1420.10">
    <property type="match status" value="2"/>
</dbReference>
<dbReference type="Gene3D" id="6.10.140.430">
    <property type="match status" value="1"/>
</dbReference>
<dbReference type="Gene3D" id="3.40.1170.10">
    <property type="entry name" value="DNA repair protein MutS, domain I"/>
    <property type="match status" value="1"/>
</dbReference>
<dbReference type="Gene3D" id="3.30.420.110">
    <property type="entry name" value="MutS, connector domain"/>
    <property type="match status" value="1"/>
</dbReference>
<dbReference type="Gene3D" id="3.40.50.300">
    <property type="entry name" value="P-loop containing nucleotide triphosphate hydrolases"/>
    <property type="match status" value="1"/>
</dbReference>
<dbReference type="HAMAP" id="MF_00096">
    <property type="entry name" value="MutS"/>
    <property type="match status" value="1"/>
</dbReference>
<dbReference type="InterPro" id="IPR005748">
    <property type="entry name" value="DNA_mismatch_repair_MutS"/>
</dbReference>
<dbReference type="InterPro" id="IPR007695">
    <property type="entry name" value="DNA_mismatch_repair_MutS-lik_N"/>
</dbReference>
<dbReference type="InterPro" id="IPR017261">
    <property type="entry name" value="DNA_mismatch_repair_MutS/MSH"/>
</dbReference>
<dbReference type="InterPro" id="IPR000432">
    <property type="entry name" value="DNA_mismatch_repair_MutS_C"/>
</dbReference>
<dbReference type="InterPro" id="IPR007861">
    <property type="entry name" value="DNA_mismatch_repair_MutS_clamp"/>
</dbReference>
<dbReference type="InterPro" id="IPR007696">
    <property type="entry name" value="DNA_mismatch_repair_MutS_core"/>
</dbReference>
<dbReference type="InterPro" id="IPR016151">
    <property type="entry name" value="DNA_mismatch_repair_MutS_N"/>
</dbReference>
<dbReference type="InterPro" id="IPR036187">
    <property type="entry name" value="DNA_mismatch_repair_MutS_sf"/>
</dbReference>
<dbReference type="InterPro" id="IPR007860">
    <property type="entry name" value="DNA_mmatch_repair_MutS_con_dom"/>
</dbReference>
<dbReference type="InterPro" id="IPR045076">
    <property type="entry name" value="MutS"/>
</dbReference>
<dbReference type="InterPro" id="IPR036678">
    <property type="entry name" value="MutS_con_dom_sf"/>
</dbReference>
<dbReference type="InterPro" id="IPR027417">
    <property type="entry name" value="P-loop_NTPase"/>
</dbReference>
<dbReference type="NCBIfam" id="TIGR01070">
    <property type="entry name" value="mutS1"/>
    <property type="match status" value="1"/>
</dbReference>
<dbReference type="NCBIfam" id="NF003810">
    <property type="entry name" value="PRK05399.1"/>
    <property type="match status" value="1"/>
</dbReference>
<dbReference type="PANTHER" id="PTHR11361:SF34">
    <property type="entry name" value="DNA MISMATCH REPAIR PROTEIN MSH1, MITOCHONDRIAL"/>
    <property type="match status" value="1"/>
</dbReference>
<dbReference type="PANTHER" id="PTHR11361">
    <property type="entry name" value="DNA MISMATCH REPAIR PROTEIN MUTS FAMILY MEMBER"/>
    <property type="match status" value="1"/>
</dbReference>
<dbReference type="Pfam" id="PF01624">
    <property type="entry name" value="MutS_I"/>
    <property type="match status" value="1"/>
</dbReference>
<dbReference type="Pfam" id="PF05188">
    <property type="entry name" value="MutS_II"/>
    <property type="match status" value="1"/>
</dbReference>
<dbReference type="Pfam" id="PF05192">
    <property type="entry name" value="MutS_III"/>
    <property type="match status" value="1"/>
</dbReference>
<dbReference type="Pfam" id="PF05190">
    <property type="entry name" value="MutS_IV"/>
    <property type="match status" value="1"/>
</dbReference>
<dbReference type="Pfam" id="PF00488">
    <property type="entry name" value="MutS_V"/>
    <property type="match status" value="1"/>
</dbReference>
<dbReference type="PIRSF" id="PIRSF037677">
    <property type="entry name" value="DNA_mis_repair_Msh6"/>
    <property type="match status" value="1"/>
</dbReference>
<dbReference type="SMART" id="SM00534">
    <property type="entry name" value="MUTSac"/>
    <property type="match status" value="1"/>
</dbReference>
<dbReference type="SMART" id="SM00533">
    <property type="entry name" value="MUTSd"/>
    <property type="match status" value="1"/>
</dbReference>
<dbReference type="SUPFAM" id="SSF55271">
    <property type="entry name" value="DNA repair protein MutS, domain I"/>
    <property type="match status" value="1"/>
</dbReference>
<dbReference type="SUPFAM" id="SSF53150">
    <property type="entry name" value="DNA repair protein MutS, domain II"/>
    <property type="match status" value="1"/>
</dbReference>
<dbReference type="SUPFAM" id="SSF48334">
    <property type="entry name" value="DNA repair protein MutS, domain III"/>
    <property type="match status" value="1"/>
</dbReference>
<dbReference type="SUPFAM" id="SSF52540">
    <property type="entry name" value="P-loop containing nucleoside triphosphate hydrolases"/>
    <property type="match status" value="1"/>
</dbReference>
<dbReference type="PROSITE" id="PS00486">
    <property type="entry name" value="DNA_MISMATCH_REPAIR_2"/>
    <property type="match status" value="1"/>
</dbReference>
<sequence length="859" mass="94483">MSQASAQHTPMMAQYLKIKREHPEVLLFYRMGDFYELFYDDAKRAASLLDITLTQRGQSAGQPIPMAGVPYHSAESYLARLVKSGESVAICEQIGDPATAKGPVERKVVRIVTPGTLHDEALLDARRDNLVLAVHPQGDRWGLAWLELSSGHFSVLEVDGESDLLSEIQRLDPAELLAAESLSLPPALAERPGFRRQSDWLFDLESATRLLCDQFGVADLRGFGCAHLTTALTAAGVLIDYARDTQRSRLPHVTGIAVETRDEAVVIDAASRRNLEIDTNLGGGFDNTLASVLDTTATAMGSRQLKRWLNRPLRDIAQIQSRQAAVQCLIDADRHATLRDALKAIGDIERILARVALYSARPRDLARLRDALNALPALEHDLAELDEGTAIDALKHHIRPYPELAETLSRALVDNPPVVIRDGGVIGTGFDAELDEYRGLAEHAGDYLVELETRERERTGLVGLKVGYNRVHGYYIEIPRAQAREAPAEYIRRQTLKNAERFIIPELKEFEDKALSAKSRALAREKLLYDGLLETLNVDLQALQGTARALATLDVLACFAERALALDFVRPRLSDQPGLRIRGGRHPVVEHVSDHPFVPNDLMLDETRRLLVITGPNMGGKSTYMRQAALIALLAHTGSCVPADEAEIGPVDRIFTRIGSSDDLAGGRSTFMVEMTETATILHNATEHSLVLMDEIGRGTSTFDGLSLAWASAEHLVERRAFTLFATHYFEMTALTEPYDSVANVHLTAAEHRDGIVFMHRVEEGPASQSYGLQVAQLAGVPPRVVARAREKLATLEQQEVHQAGTRGGLGDSDAAAPQQADLFASAPHPVVEALEKLDLDAISPRQAMALLYEWREQC</sequence>
<proteinExistence type="inferred from homology"/>